<evidence type="ECO:0000305" key="1">
    <source>
    </source>
</evidence>
<gene>
    <name type="ordered locus">YBL109W</name>
</gene>
<reference key="1">
    <citation type="journal article" date="1994" name="EMBO J.">
        <title>Complete DNA sequence of yeast chromosome II.</title>
        <authorList>
            <person name="Feldmann H."/>
            <person name="Aigle M."/>
            <person name="Aljinovic G."/>
            <person name="Andre B."/>
            <person name="Baclet M.C."/>
            <person name="Barthe C."/>
            <person name="Baur A."/>
            <person name="Becam A.-M."/>
            <person name="Biteau N."/>
            <person name="Boles E."/>
            <person name="Brandt T."/>
            <person name="Brendel M."/>
            <person name="Brueckner M."/>
            <person name="Bussereau F."/>
            <person name="Christiansen C."/>
            <person name="Contreras R."/>
            <person name="Crouzet M."/>
            <person name="Cziepluch C."/>
            <person name="Demolis N."/>
            <person name="Delaveau T."/>
            <person name="Doignon F."/>
            <person name="Domdey H."/>
            <person name="Duesterhus S."/>
            <person name="Dubois E."/>
            <person name="Dujon B."/>
            <person name="El Bakkoury M."/>
            <person name="Entian K.-D."/>
            <person name="Feuermann M."/>
            <person name="Fiers W."/>
            <person name="Fobo G.M."/>
            <person name="Fritz C."/>
            <person name="Gassenhuber J."/>
            <person name="Glansdorff N."/>
            <person name="Goffeau A."/>
            <person name="Grivell L.A."/>
            <person name="de Haan M."/>
            <person name="Hein C."/>
            <person name="Herbert C.J."/>
            <person name="Hollenberg C.P."/>
            <person name="Holmstroem K."/>
            <person name="Jacq C."/>
            <person name="Jacquet M."/>
            <person name="Jauniaux J.-C."/>
            <person name="Jonniaux J.-L."/>
            <person name="Kallesoee T."/>
            <person name="Kiesau P."/>
            <person name="Kirchrath L."/>
            <person name="Koetter P."/>
            <person name="Korol S."/>
            <person name="Liebl S."/>
            <person name="Logghe M."/>
            <person name="Lohan A.J.E."/>
            <person name="Louis E.J."/>
            <person name="Li Z.Y."/>
            <person name="Maat M.J."/>
            <person name="Mallet L."/>
            <person name="Mannhaupt G."/>
            <person name="Messenguy F."/>
            <person name="Miosga T."/>
            <person name="Molemans F."/>
            <person name="Mueller S."/>
            <person name="Nasr F."/>
            <person name="Obermaier B."/>
            <person name="Perea J."/>
            <person name="Pierard A."/>
            <person name="Piravandi E."/>
            <person name="Pohl F.M."/>
            <person name="Pohl T.M."/>
            <person name="Potier S."/>
            <person name="Proft M."/>
            <person name="Purnelle B."/>
            <person name="Ramezani Rad M."/>
            <person name="Rieger M."/>
            <person name="Rose M."/>
            <person name="Schaaff-Gerstenschlaeger I."/>
            <person name="Scherens B."/>
            <person name="Schwarzlose C."/>
            <person name="Skala J."/>
            <person name="Slonimski P.P."/>
            <person name="Smits P.H.M."/>
            <person name="Souciet J.-L."/>
            <person name="Steensma H.Y."/>
            <person name="Stucka R."/>
            <person name="Urrestarazu L.A."/>
            <person name="van der Aart Q.J.M."/>
            <person name="Van Dyck L."/>
            <person name="Vassarotti A."/>
            <person name="Vetter I."/>
            <person name="Vierendeels F."/>
            <person name="Vissers S."/>
            <person name="Wagner G."/>
            <person name="de Wergifosse P."/>
            <person name="Wolfe K.H."/>
            <person name="Zagulski M."/>
            <person name="Zimmermann F.K."/>
            <person name="Mewes H.-W."/>
            <person name="Kleine K."/>
        </authorList>
    </citation>
    <scope>NUCLEOTIDE SEQUENCE [LARGE SCALE GENOMIC DNA]</scope>
    <source>
        <strain>ATCC 204508 / S288c</strain>
    </source>
</reference>
<reference key="2">
    <citation type="journal article" date="2014" name="G3 (Bethesda)">
        <title>The reference genome sequence of Saccharomyces cerevisiae: Then and now.</title>
        <authorList>
            <person name="Engel S.R."/>
            <person name="Dietrich F.S."/>
            <person name="Fisk D.G."/>
            <person name="Binkley G."/>
            <person name="Balakrishnan R."/>
            <person name="Costanzo M.C."/>
            <person name="Dwight S.S."/>
            <person name="Hitz B.C."/>
            <person name="Karra K."/>
            <person name="Nash R.S."/>
            <person name="Weng S."/>
            <person name="Wong E.D."/>
            <person name="Lloyd P."/>
            <person name="Skrzypek M.S."/>
            <person name="Miyasato S.R."/>
            <person name="Simison M."/>
            <person name="Cherry J.M."/>
        </authorList>
    </citation>
    <scope>GENOME REANNOTATION</scope>
    <source>
        <strain>ATCC 204508 / S288c</strain>
    </source>
</reference>
<dbReference type="EMBL" id="Z35869">
    <property type="protein sequence ID" value="CAA84936.1"/>
    <property type="molecule type" value="Genomic_DNA"/>
</dbReference>
<dbReference type="EMBL" id="Y08934">
    <property type="status" value="NOT_ANNOTATED_CDS"/>
    <property type="molecule type" value="Genomic_DNA"/>
</dbReference>
<dbReference type="PIR" id="S70302">
    <property type="entry name" value="S70302"/>
</dbReference>
<dbReference type="STRING" id="4932.YBL109W"/>
<dbReference type="PaxDb" id="4932-YBL109W"/>
<dbReference type="EnsemblFungi" id="YBL109W_mRNA">
    <property type="protein sequence ID" value="YBL109W"/>
    <property type="gene ID" value="YBL109W"/>
</dbReference>
<dbReference type="AGR" id="SGD:S000002150"/>
<dbReference type="SGD" id="S000002150">
    <property type="gene designation" value="YBL109W"/>
</dbReference>
<dbReference type="GeneTree" id="ENSGT00940000180487"/>
<dbReference type="HOGENOM" id="CLU_2160387_0_0_1"/>
<proteinExistence type="uncertain"/>
<comment type="caution">
    <text evidence="1">Product of a dubious gene prediction unlikely to encode a functional protein. Because of that it is not part of the S.cerevisiae S288c complete/reference proteome set.</text>
</comment>
<name>YB109_YEAST</name>
<organism>
    <name type="scientific">Saccharomyces cerevisiae (strain ATCC 204508 / S288c)</name>
    <name type="common">Baker's yeast</name>
    <dbReference type="NCBI Taxonomy" id="559292"/>
    <lineage>
        <taxon>Eukaryota</taxon>
        <taxon>Fungi</taxon>
        <taxon>Dikarya</taxon>
        <taxon>Ascomycota</taxon>
        <taxon>Saccharomycotina</taxon>
        <taxon>Saccharomycetes</taxon>
        <taxon>Saccharomycetales</taxon>
        <taxon>Saccharomycetaceae</taxon>
        <taxon>Saccharomyces</taxon>
    </lineage>
</organism>
<feature type="chain" id="PRO_0000299790" description="Putative uncharacterized protein YBL109W">
    <location>
        <begin position="1"/>
        <end position="111"/>
    </location>
</feature>
<accession>P89495</accession>
<protein>
    <recommendedName>
        <fullName>Putative uncharacterized protein YBL109W</fullName>
    </recommendedName>
</protein>
<sequence>MSLRPCLTPSSMQYSDIYIYPNTTLTLPYFNPSNLSLNLPSHYPTSPLVTLSHSTIPLPTTIHPSTYYHQSTVHHNRYPPISHIQLHYHLPCHYSTIHHLLLTILLFYPPY</sequence>